<proteinExistence type="inferred from homology"/>
<accession>Q1MNF5</accession>
<name>NTPPB_RHIJ3</name>
<evidence type="ECO:0000255" key="1">
    <source>
        <dbReference type="HAMAP-Rule" id="MF_00528"/>
    </source>
</evidence>
<gene>
    <name type="ordered locus">RL0002</name>
</gene>
<sequence length="199" mass="21418">MTPKLILASSSPFRRMLMENAGLSFEAHAARIDERAVEAPLENAGAKPDAVALVLARAKAEEVSSRFPDSLVIGSDQTMSLGDSVFHKPTDLADAASHLQALSGVTHRLNSAVAIVSDGVVLWEHLAHAQLTMRPLTVEFIARHLARVGERALSSVGAYQLEGEGIQLFEKIEGDYFTILGLPMLPLLKKLRELGAIDG</sequence>
<keyword id="KW-0963">Cytoplasm</keyword>
<keyword id="KW-0378">Hydrolase</keyword>
<keyword id="KW-0546">Nucleotide metabolism</keyword>
<dbReference type="EC" id="3.6.1.-" evidence="1"/>
<dbReference type="EMBL" id="AM236080">
    <property type="protein sequence ID" value="CAK05490.1"/>
    <property type="molecule type" value="Genomic_DNA"/>
</dbReference>
<dbReference type="RefSeq" id="WP_011649835.1">
    <property type="nucleotide sequence ID" value="NC_008380.1"/>
</dbReference>
<dbReference type="SMR" id="Q1MNF5"/>
<dbReference type="EnsemblBacteria" id="CAK05490">
    <property type="protein sequence ID" value="CAK05490"/>
    <property type="gene ID" value="RL0002"/>
</dbReference>
<dbReference type="KEGG" id="rle:RL0002"/>
<dbReference type="eggNOG" id="COG0424">
    <property type="taxonomic scope" value="Bacteria"/>
</dbReference>
<dbReference type="HOGENOM" id="CLU_040416_1_1_5"/>
<dbReference type="Proteomes" id="UP000006575">
    <property type="component" value="Chromosome"/>
</dbReference>
<dbReference type="GO" id="GO:0005737">
    <property type="term" value="C:cytoplasm"/>
    <property type="evidence" value="ECO:0007669"/>
    <property type="project" value="UniProtKB-SubCell"/>
</dbReference>
<dbReference type="GO" id="GO:0047429">
    <property type="term" value="F:nucleoside triphosphate diphosphatase activity"/>
    <property type="evidence" value="ECO:0007669"/>
    <property type="project" value="InterPro"/>
</dbReference>
<dbReference type="GO" id="GO:0009117">
    <property type="term" value="P:nucleotide metabolic process"/>
    <property type="evidence" value="ECO:0007669"/>
    <property type="project" value="UniProtKB-KW"/>
</dbReference>
<dbReference type="CDD" id="cd00555">
    <property type="entry name" value="Maf"/>
    <property type="match status" value="1"/>
</dbReference>
<dbReference type="Gene3D" id="3.90.950.10">
    <property type="match status" value="1"/>
</dbReference>
<dbReference type="HAMAP" id="MF_00528">
    <property type="entry name" value="Maf"/>
    <property type="match status" value="1"/>
</dbReference>
<dbReference type="InterPro" id="IPR029001">
    <property type="entry name" value="ITPase-like_fam"/>
</dbReference>
<dbReference type="InterPro" id="IPR003697">
    <property type="entry name" value="Maf-like"/>
</dbReference>
<dbReference type="NCBIfam" id="TIGR00172">
    <property type="entry name" value="maf"/>
    <property type="match status" value="1"/>
</dbReference>
<dbReference type="NCBIfam" id="NF002690">
    <property type="entry name" value="PRK02478.1"/>
    <property type="match status" value="1"/>
</dbReference>
<dbReference type="PANTHER" id="PTHR43213">
    <property type="entry name" value="BIFUNCTIONAL DTTP/UTP PYROPHOSPHATASE/METHYLTRANSFERASE PROTEIN-RELATED"/>
    <property type="match status" value="1"/>
</dbReference>
<dbReference type="PANTHER" id="PTHR43213:SF5">
    <property type="entry name" value="BIFUNCTIONAL DTTP_UTP PYROPHOSPHATASE_METHYLTRANSFERASE PROTEIN-RELATED"/>
    <property type="match status" value="1"/>
</dbReference>
<dbReference type="Pfam" id="PF02545">
    <property type="entry name" value="Maf"/>
    <property type="match status" value="1"/>
</dbReference>
<dbReference type="PIRSF" id="PIRSF006305">
    <property type="entry name" value="Maf"/>
    <property type="match status" value="1"/>
</dbReference>
<dbReference type="SUPFAM" id="SSF52972">
    <property type="entry name" value="ITPase-like"/>
    <property type="match status" value="1"/>
</dbReference>
<feature type="chain" id="PRO_0000267393" description="7-methyl-GTP pyrophosphatase">
    <location>
        <begin position="1"/>
        <end position="199"/>
    </location>
</feature>
<feature type="active site" description="Proton acceptor" evidence="1">
    <location>
        <position position="76"/>
    </location>
</feature>
<feature type="site" description="Important for substrate specificity" evidence="1">
    <location>
        <position position="13"/>
    </location>
</feature>
<feature type="site" description="Important for substrate specificity" evidence="1">
    <location>
        <position position="77"/>
    </location>
</feature>
<feature type="site" description="Important for substrate specificity" evidence="1">
    <location>
        <position position="162"/>
    </location>
</feature>
<protein>
    <recommendedName>
        <fullName evidence="1">7-methyl-GTP pyrophosphatase</fullName>
        <shortName evidence="1">m(7)GTP pyrophosphatase</shortName>
        <ecNumber evidence="1">3.6.1.-</ecNumber>
    </recommendedName>
</protein>
<organism>
    <name type="scientific">Rhizobium johnstonii (strain DSM 114642 / LMG 32736 / 3841)</name>
    <name type="common">Rhizobium leguminosarum bv. viciae</name>
    <dbReference type="NCBI Taxonomy" id="216596"/>
    <lineage>
        <taxon>Bacteria</taxon>
        <taxon>Pseudomonadati</taxon>
        <taxon>Pseudomonadota</taxon>
        <taxon>Alphaproteobacteria</taxon>
        <taxon>Hyphomicrobiales</taxon>
        <taxon>Rhizobiaceae</taxon>
        <taxon>Rhizobium/Agrobacterium group</taxon>
        <taxon>Rhizobium</taxon>
        <taxon>Rhizobium johnstonii</taxon>
    </lineage>
</organism>
<comment type="function">
    <text evidence="1">Nucleoside triphosphate pyrophosphatase that hydrolyzes 7-methyl-GTP (m(7)GTP). May have a dual role in cell division arrest and in preventing the incorporation of modified nucleotides into cellular nucleic acids.</text>
</comment>
<comment type="catalytic activity">
    <reaction evidence="1">
        <text>N(7)-methyl-GTP + H2O = N(7)-methyl-GMP + diphosphate + H(+)</text>
        <dbReference type="Rhea" id="RHEA:58744"/>
        <dbReference type="ChEBI" id="CHEBI:15377"/>
        <dbReference type="ChEBI" id="CHEBI:15378"/>
        <dbReference type="ChEBI" id="CHEBI:33019"/>
        <dbReference type="ChEBI" id="CHEBI:58285"/>
        <dbReference type="ChEBI" id="CHEBI:87133"/>
    </reaction>
</comment>
<comment type="cofactor">
    <cofactor evidence="1">
        <name>a divalent metal cation</name>
        <dbReference type="ChEBI" id="CHEBI:60240"/>
    </cofactor>
</comment>
<comment type="subcellular location">
    <subcellularLocation>
        <location evidence="1">Cytoplasm</location>
    </subcellularLocation>
</comment>
<comment type="similarity">
    <text evidence="1">Belongs to the Maf family. YceF subfamily.</text>
</comment>
<reference key="1">
    <citation type="journal article" date="2006" name="Genome Biol.">
        <title>The genome of Rhizobium leguminosarum has recognizable core and accessory components.</title>
        <authorList>
            <person name="Young J.P.W."/>
            <person name="Crossman L.C."/>
            <person name="Johnston A.W.B."/>
            <person name="Thomson N.R."/>
            <person name="Ghazoui Z.F."/>
            <person name="Hull K.H."/>
            <person name="Wexler M."/>
            <person name="Curson A.R.J."/>
            <person name="Todd J.D."/>
            <person name="Poole P.S."/>
            <person name="Mauchline T.H."/>
            <person name="East A.K."/>
            <person name="Quail M.A."/>
            <person name="Churcher C."/>
            <person name="Arrowsmith C."/>
            <person name="Cherevach I."/>
            <person name="Chillingworth T."/>
            <person name="Clarke K."/>
            <person name="Cronin A."/>
            <person name="Davis P."/>
            <person name="Fraser A."/>
            <person name="Hance Z."/>
            <person name="Hauser H."/>
            <person name="Jagels K."/>
            <person name="Moule S."/>
            <person name="Mungall K."/>
            <person name="Norbertczak H."/>
            <person name="Rabbinowitsch E."/>
            <person name="Sanders M."/>
            <person name="Simmonds M."/>
            <person name="Whitehead S."/>
            <person name="Parkhill J."/>
        </authorList>
    </citation>
    <scope>NUCLEOTIDE SEQUENCE [LARGE SCALE GENOMIC DNA]</scope>
    <source>
        <strain>DSM 114642 / LMG 32736 / 3841</strain>
    </source>
</reference>